<feature type="transit peptide" description="Chloroplast" evidence="2">
    <location>
        <begin position="1"/>
        <end position="63"/>
    </location>
</feature>
<feature type="chain" id="PRO_0000429848" description="Probable GTP diphosphokinase RSH2, chloroplastic">
    <location>
        <begin position="64"/>
        <end position="710"/>
    </location>
</feature>
<feature type="domain" description="HD" evidence="3">
    <location>
        <begin position="233"/>
        <end position="337"/>
    </location>
</feature>
<protein>
    <recommendedName>
        <fullName>Probable GTP diphosphokinase RSH2, chloroplastic</fullName>
        <ecNumber>2.7.6.5</ecNumber>
    </recommendedName>
    <alternativeName>
        <fullName>RelA/SpoT homolog 2</fullName>
        <shortName>AtRSH2</shortName>
    </alternativeName>
    <alternativeName>
        <fullName>ppGpp synthetase RSH2</fullName>
    </alternativeName>
</protein>
<accession>Q9M5P6</accession>
<comment type="function">
    <text evidence="1">Probable ppGpp (guanosine 3'-diphosphate 5'-diphosphate) synthetase that may be involved in a rapid plant ppGpp-mediated response to pathogens and other stresses.</text>
</comment>
<comment type="catalytic activity">
    <reaction>
        <text>GTP + ATP = guanosine 3'-diphosphate 5'-triphosphate + AMP</text>
        <dbReference type="Rhea" id="RHEA:22088"/>
        <dbReference type="ChEBI" id="CHEBI:30616"/>
        <dbReference type="ChEBI" id="CHEBI:37565"/>
        <dbReference type="ChEBI" id="CHEBI:142410"/>
        <dbReference type="ChEBI" id="CHEBI:456215"/>
        <dbReference type="EC" id="2.7.6.5"/>
    </reaction>
</comment>
<comment type="subcellular location">
    <subcellularLocation>
        <location evidence="4">Plastid</location>
        <location evidence="4">Chloroplast</location>
    </subcellularLocation>
</comment>
<comment type="similarity">
    <text evidence="4">Belongs to the RelA/SpoT family.</text>
</comment>
<reference key="1">
    <citation type="journal article" date="2000" name="Proc. Natl. Acad. Sci. U.S.A.">
        <title>Arabidopsis RelA/SpoT homologs implicate (p)ppGpp in plant signaling.</title>
        <authorList>
            <person name="van der Biezen E.A."/>
            <person name="Sun J."/>
            <person name="Coleman M.J."/>
            <person name="Bibb M.J."/>
            <person name="Jones J.D."/>
        </authorList>
    </citation>
    <scope>NUCLEOTIDE SEQUENCE [MRNA]</scope>
    <source>
        <strain>cv. Landsberg erecta</strain>
    </source>
</reference>
<proteinExistence type="evidence at transcript level"/>
<organism>
    <name type="scientific">Arabidopsis thaliana</name>
    <name type="common">Mouse-ear cress</name>
    <dbReference type="NCBI Taxonomy" id="3702"/>
    <lineage>
        <taxon>Eukaryota</taxon>
        <taxon>Viridiplantae</taxon>
        <taxon>Streptophyta</taxon>
        <taxon>Embryophyta</taxon>
        <taxon>Tracheophyta</taxon>
        <taxon>Spermatophyta</taxon>
        <taxon>Magnoliopsida</taxon>
        <taxon>eudicotyledons</taxon>
        <taxon>Gunneridae</taxon>
        <taxon>Pentapetalae</taxon>
        <taxon>rosids</taxon>
        <taxon>malvids</taxon>
        <taxon>Brassicales</taxon>
        <taxon>Brassicaceae</taxon>
        <taxon>Camelineae</taxon>
        <taxon>Arabidopsis</taxon>
    </lineage>
</organism>
<gene>
    <name type="primary">RSH2</name>
</gene>
<keyword id="KW-0067">ATP-binding</keyword>
<keyword id="KW-0150">Chloroplast</keyword>
<keyword id="KW-0342">GTP-binding</keyword>
<keyword id="KW-0418">Kinase</keyword>
<keyword id="KW-0547">Nucleotide-binding</keyword>
<keyword id="KW-0934">Plastid</keyword>
<keyword id="KW-0346">Stress response</keyword>
<keyword id="KW-0808">Transferase</keyword>
<keyword id="KW-0809">Transit peptide</keyword>
<evidence type="ECO:0000250" key="1"/>
<evidence type="ECO:0000255" key="2"/>
<evidence type="ECO:0000255" key="3">
    <source>
        <dbReference type="PROSITE-ProRule" id="PRU01175"/>
    </source>
</evidence>
<evidence type="ECO:0000305" key="4"/>
<name>RSH2L_ARATH</name>
<sequence length="710" mass="79207">MVVATTIALYASPPSSVCSTPHQISCDLDLTSRSSSTSSSMASSPQKPIVGGLSSLFSSASVKSSSSSSCSYSTAVDEFSSLRYDRSDDLKDLSFSSSFGYSPAKFVNSFRRDHQSPISVLHGPVSCSCSPPMRMSRDRNLDGSFRLGASRLFNGFVRKALGSCVDYELGSDSGLVDELTFPMEVDTIKPYARDLLRRAQLRHKIFNDESVIKAFYEAEKAHRGQMRASRDPYLQHCVETAMLLANIGANSTVVVAGLLHDTVDDSFMSYDYILRNFGAGVADLVEGVSKLSQLSKLARENNTACKTVEADRLHPMFLAMADARAVLIKLADRLHNMKTLYALSPVKQQRFAKETLEIFAPLANCLGISTWKVQLENLCFKHLYPNQHNEMSTMLEDSFDEAMITSAIEKLDQALKKAGISYHVLCGRHKSLYSIYSKMLKKKLTVDEIHDIHGLRLIVDNEGDCYKALGVVHSLWSEVPGKLKDYITHPKFNGYQSLHTVVMDNGTVPLEVQIRTQEMHLQAEFGFAAHWRYKEGGCKYSSFVLQMVEWARWVVTWHCEAMSKDRSSISSSDSIKPPLQVFRLTLEDCPASYKPNSSQDGPVYVIVIENDKMSVQEFPASSTVSDLLSRAGPGSSRWSMYGIPAKEELRPRLNQIPVSDLKWKLKMGDVVELTPKIPDESLTEYREEIQRMYDRGLAFSRPGTMVGWGS</sequence>
<dbReference type="EC" id="2.7.6.5"/>
<dbReference type="EMBL" id="AF225703">
    <property type="protein sequence ID" value="AAF37282.1"/>
    <property type="molecule type" value="mRNA"/>
</dbReference>
<dbReference type="SMR" id="Q9M5P6"/>
<dbReference type="ExpressionAtlas" id="Q9M5P6">
    <property type="expression patterns" value="baseline and differential"/>
</dbReference>
<dbReference type="GO" id="GO:0009507">
    <property type="term" value="C:chloroplast"/>
    <property type="evidence" value="ECO:0007669"/>
    <property type="project" value="UniProtKB-SubCell"/>
</dbReference>
<dbReference type="GO" id="GO:0005524">
    <property type="term" value="F:ATP binding"/>
    <property type="evidence" value="ECO:0007669"/>
    <property type="project" value="UniProtKB-KW"/>
</dbReference>
<dbReference type="GO" id="GO:0005525">
    <property type="term" value="F:GTP binding"/>
    <property type="evidence" value="ECO:0007669"/>
    <property type="project" value="UniProtKB-KW"/>
</dbReference>
<dbReference type="GO" id="GO:0008728">
    <property type="term" value="F:GTP diphosphokinase activity"/>
    <property type="evidence" value="ECO:0007669"/>
    <property type="project" value="UniProtKB-EC"/>
</dbReference>
<dbReference type="GO" id="GO:0016301">
    <property type="term" value="F:kinase activity"/>
    <property type="evidence" value="ECO:0007669"/>
    <property type="project" value="UniProtKB-KW"/>
</dbReference>
<dbReference type="GO" id="GO:0015969">
    <property type="term" value="P:guanosine tetraphosphate metabolic process"/>
    <property type="evidence" value="ECO:0007669"/>
    <property type="project" value="InterPro"/>
</dbReference>
<dbReference type="CDD" id="cd00077">
    <property type="entry name" value="HDc"/>
    <property type="match status" value="1"/>
</dbReference>
<dbReference type="CDD" id="cd05399">
    <property type="entry name" value="NT_Rel-Spo_like"/>
    <property type="match status" value="1"/>
</dbReference>
<dbReference type="FunFam" id="1.10.3210.10:FF:000001">
    <property type="entry name" value="GTP pyrophosphokinase RelA"/>
    <property type="match status" value="1"/>
</dbReference>
<dbReference type="FunFam" id="3.30.460.10:FF:000001">
    <property type="entry name" value="GTP pyrophosphokinase RelA"/>
    <property type="match status" value="1"/>
</dbReference>
<dbReference type="Gene3D" id="3.30.460.10">
    <property type="entry name" value="Beta Polymerase, domain 2"/>
    <property type="match status" value="1"/>
</dbReference>
<dbReference type="Gene3D" id="1.10.3210.10">
    <property type="entry name" value="Hypothetical protein af1432"/>
    <property type="match status" value="1"/>
</dbReference>
<dbReference type="InterPro" id="IPR003607">
    <property type="entry name" value="HD/PDEase_dom"/>
</dbReference>
<dbReference type="InterPro" id="IPR006674">
    <property type="entry name" value="HD_domain"/>
</dbReference>
<dbReference type="InterPro" id="IPR043519">
    <property type="entry name" value="NT_sf"/>
</dbReference>
<dbReference type="InterPro" id="IPR007685">
    <property type="entry name" value="RelA_SpoT"/>
</dbReference>
<dbReference type="PANTHER" id="PTHR21262:SF33">
    <property type="entry name" value="GTP DIPHOSPHOKINASE RSH2, CHLOROPLASTIC-RELATED"/>
    <property type="match status" value="1"/>
</dbReference>
<dbReference type="PANTHER" id="PTHR21262">
    <property type="entry name" value="GUANOSINE-3',5'-BIS DIPHOSPHATE 3'-PYROPHOSPHOHYDROLASE"/>
    <property type="match status" value="1"/>
</dbReference>
<dbReference type="Pfam" id="PF13328">
    <property type="entry name" value="HD_4"/>
    <property type="match status" value="1"/>
</dbReference>
<dbReference type="Pfam" id="PF04607">
    <property type="entry name" value="RelA_SpoT"/>
    <property type="match status" value="1"/>
</dbReference>
<dbReference type="SMART" id="SM00471">
    <property type="entry name" value="HDc"/>
    <property type="match status" value="1"/>
</dbReference>
<dbReference type="SMART" id="SM00954">
    <property type="entry name" value="RelA_SpoT"/>
    <property type="match status" value="1"/>
</dbReference>
<dbReference type="SUPFAM" id="SSF109604">
    <property type="entry name" value="HD-domain/PDEase-like"/>
    <property type="match status" value="1"/>
</dbReference>
<dbReference type="SUPFAM" id="SSF81301">
    <property type="entry name" value="Nucleotidyltransferase"/>
    <property type="match status" value="1"/>
</dbReference>
<dbReference type="PROSITE" id="PS51831">
    <property type="entry name" value="HD"/>
    <property type="match status" value="1"/>
</dbReference>